<reference key="1">
    <citation type="journal article" date="1989" name="Proc. Natl. Acad. Sci. U.S.A.">
        <title>A ubiquitin carrier protein from wheat germ is structurally and functionally similar to the yeast DNA repair enzyme encoded by RAD6.</title>
        <authorList>
            <person name="Sullivan M.L."/>
            <person name="Vierstra R.D."/>
        </authorList>
    </citation>
    <scope>NUCLEOTIDE SEQUENCE [MRNA]</scope>
    <source>
        <strain>cv. Augusta</strain>
    </source>
</reference>
<reference key="2">
    <citation type="journal article" date="1991" name="J. Biol. Chem.">
        <title>Cloning of a 16-kDa ubiquitin carrier protein from wheat and Arabidopsis thaliana. Identification of functional domains by in vitro mutagenesis.</title>
        <authorList>
            <person name="Sullivan M.L."/>
            <person name="Vierstra R.D."/>
        </authorList>
    </citation>
    <scope>MUTAGENESIS OF CYS-85</scope>
</reference>
<proteinExistence type="evidence at protein level"/>
<evidence type="ECO:0000255" key="1">
    <source>
        <dbReference type="PROSITE-ProRule" id="PRU00388"/>
    </source>
</evidence>
<evidence type="ECO:0000255" key="2">
    <source>
        <dbReference type="PROSITE-ProRule" id="PRU10133"/>
    </source>
</evidence>
<evidence type="ECO:0000256" key="3">
    <source>
        <dbReference type="SAM" id="MobiDB-lite"/>
    </source>
</evidence>
<evidence type="ECO:0000269" key="4">
    <source>
    </source>
</evidence>
<comment type="function">
    <text>Catalyzes the covalent attachment of ubiquitin to other proteins.</text>
</comment>
<comment type="catalytic activity">
    <reaction evidence="1 2">
        <text>S-ubiquitinyl-[E1 ubiquitin-activating enzyme]-L-cysteine + [E2 ubiquitin-conjugating enzyme]-L-cysteine = [E1 ubiquitin-activating enzyme]-L-cysteine + S-ubiquitinyl-[E2 ubiquitin-conjugating enzyme]-L-cysteine.</text>
        <dbReference type="EC" id="2.3.2.23"/>
    </reaction>
</comment>
<comment type="pathway">
    <text evidence="1">Protein modification; protein ubiquitination.</text>
</comment>
<comment type="similarity">
    <text evidence="1">Belongs to the ubiquitin-conjugating enzyme family.</text>
</comment>
<organism>
    <name type="scientific">Triticum aestivum</name>
    <name type="common">Wheat</name>
    <dbReference type="NCBI Taxonomy" id="4565"/>
    <lineage>
        <taxon>Eukaryota</taxon>
        <taxon>Viridiplantae</taxon>
        <taxon>Streptophyta</taxon>
        <taxon>Embryophyta</taxon>
        <taxon>Tracheophyta</taxon>
        <taxon>Spermatophyta</taxon>
        <taxon>Magnoliopsida</taxon>
        <taxon>Liliopsida</taxon>
        <taxon>Poales</taxon>
        <taxon>Poaceae</taxon>
        <taxon>BOP clade</taxon>
        <taxon>Pooideae</taxon>
        <taxon>Triticodae</taxon>
        <taxon>Triticeae</taxon>
        <taxon>Triticinae</taxon>
        <taxon>Triticum</taxon>
    </lineage>
</organism>
<keyword id="KW-0067">ATP-binding</keyword>
<keyword id="KW-0547">Nucleotide-binding</keyword>
<keyword id="KW-1185">Reference proteome</keyword>
<keyword id="KW-0808">Transferase</keyword>
<keyword id="KW-0833">Ubl conjugation pathway</keyword>
<sequence length="184" mass="21126">MSSPSKRREMDLMKLMMSDYKVDMINDGMHEFFVHFHGPKDSIYQGGVWKVRVELTEAYPYKSPSIGFTNKIYHPNVDEMSGSVCLDVINQTWSPMFDLVNIFEVFLPQLLLYPNPSDPLNGEAASLMMRDKNAYENKVKEYCERYAKPEDISPEEEEEESDEELSDAEGYDSGDEAIMGHADP</sequence>
<accession>P16577</accession>
<name>UBC4_WHEAT</name>
<protein>
    <recommendedName>
        <fullName>Ubiquitin-conjugating enzyme E2-23 kDa</fullName>
        <ecNumber>2.3.2.23</ecNumber>
    </recommendedName>
    <alternativeName>
        <fullName>E2 ubiquitin-conjugating enzyme</fullName>
    </alternativeName>
    <alternativeName>
        <fullName>Ubiquitin carrier protein</fullName>
    </alternativeName>
    <alternativeName>
        <fullName>Ubiquitin-protein ligase</fullName>
    </alternativeName>
</protein>
<feature type="chain" id="PRO_0000082581" description="Ubiquitin-conjugating enzyme E2-23 kDa">
    <location>
        <begin position="1"/>
        <end position="184"/>
    </location>
</feature>
<feature type="domain" description="UBC core" evidence="1">
    <location>
        <begin position="1"/>
        <end position="148"/>
    </location>
</feature>
<feature type="region of interest" description="Disordered" evidence="3">
    <location>
        <begin position="146"/>
        <end position="184"/>
    </location>
</feature>
<feature type="compositionally biased region" description="Acidic residues" evidence="3">
    <location>
        <begin position="152"/>
        <end position="175"/>
    </location>
</feature>
<feature type="active site" description="Glycyl thioester intermediate" evidence="1">
    <location>
        <position position="85"/>
    </location>
</feature>
<feature type="mutagenesis site" description="Loss of activity." evidence="4">
    <original>C</original>
    <variation>S</variation>
    <location>
        <position position="85"/>
    </location>
</feature>
<dbReference type="EC" id="2.3.2.23"/>
<dbReference type="EMBL" id="M28059">
    <property type="protein sequence ID" value="AAA34309.1"/>
    <property type="molecule type" value="mRNA"/>
</dbReference>
<dbReference type="PIR" id="A34506">
    <property type="entry name" value="A34506"/>
</dbReference>
<dbReference type="SMR" id="P16577"/>
<dbReference type="STRING" id="4565.P16577"/>
<dbReference type="PaxDb" id="4565-Traes_5DL_51681402F.1"/>
<dbReference type="EnsemblPlants" id="TraesARI4A03G02189310.1">
    <property type="protein sequence ID" value="TraesARI4A03G02189310.1"/>
    <property type="gene ID" value="TraesARI4A03G02189310"/>
</dbReference>
<dbReference type="EnsemblPlants" id="TraesCAD_scaffold_095608_01G000100.1">
    <property type="protein sequence ID" value="TraesCAD_scaffold_095608_01G000100.1"/>
    <property type="gene ID" value="TraesCAD_scaffold_095608_01G000100"/>
</dbReference>
<dbReference type="EnsemblPlants" id="TraesCLE_scaffold_012902_01G000500.1">
    <property type="protein sequence ID" value="TraesCLE_scaffold_012902_01G000500.1"/>
    <property type="gene ID" value="TraesCLE_scaffold_012902_01G000500"/>
</dbReference>
<dbReference type="EnsemblPlants" id="TraesCS4A02G313600.1">
    <property type="protein sequence ID" value="TraesCS4A02G313600.1"/>
    <property type="gene ID" value="TraesCS4A02G313600"/>
</dbReference>
<dbReference type="EnsemblPlants" id="TraesCS4A03G0783100.1">
    <property type="protein sequence ID" value="TraesCS4A03G0783100.1.CDS"/>
    <property type="gene ID" value="TraesCS4A03G0783100"/>
</dbReference>
<dbReference type="EnsemblPlants" id="TraesJAGUn03G04519160.1">
    <property type="protein sequence ID" value="TraesJAGUn03G04519160.1"/>
    <property type="gene ID" value="TraesJAGUn03G04519160"/>
</dbReference>
<dbReference type="EnsemblPlants" id="TraesJUL4A03G02171270.1">
    <property type="protein sequence ID" value="TraesJUL4A03G02171270.1"/>
    <property type="gene ID" value="TraesJUL4A03G02171270"/>
</dbReference>
<dbReference type="EnsemblPlants" id="TraesKAR4A01G0371660.1">
    <property type="protein sequence ID" value="cds.TraesKAR4A01G0371660.1"/>
    <property type="gene ID" value="TraesKAR4A01G0371660"/>
</dbReference>
<dbReference type="EnsemblPlants" id="TraesLAC4A03G02098910.1">
    <property type="protein sequence ID" value="TraesLAC4A03G02098910.1"/>
    <property type="gene ID" value="TraesLAC4A03G02098910"/>
</dbReference>
<dbReference type="EnsemblPlants" id="TraesLDM4A03G02150620.1">
    <property type="protein sequence ID" value="TraesLDM4A03G02150620.1"/>
    <property type="gene ID" value="TraesLDM4A03G02150620"/>
</dbReference>
<dbReference type="EnsemblPlants" id="TraesMAC4A03G02150770.1">
    <property type="protein sequence ID" value="TraesMAC4A03G02150770.1"/>
    <property type="gene ID" value="TraesMAC4A03G02150770"/>
</dbReference>
<dbReference type="EnsemblPlants" id="TraesMAC4A03G02150770.2">
    <property type="protein sequence ID" value="TraesMAC4A03G02150770.2"/>
    <property type="gene ID" value="TraesMAC4A03G02150770"/>
</dbReference>
<dbReference type="EnsemblPlants" id="TraesNOR4A03G02173370.1">
    <property type="protein sequence ID" value="TraesNOR4A03G02173370.1"/>
    <property type="gene ID" value="TraesNOR4A03G02173370"/>
</dbReference>
<dbReference type="EnsemblPlants" id="TraesPARA_EIv1.0_1231960.1">
    <property type="protein sequence ID" value="TraesPARA_EIv1.0_1231960.1.CDS"/>
    <property type="gene ID" value="TraesPARA_EIv1.0_1231960"/>
</dbReference>
<dbReference type="EnsemblPlants" id="TraesROB_scaffold_016095_01G000100.1">
    <property type="protein sequence ID" value="TraesROB_scaffold_016095_01G000100.1"/>
    <property type="gene ID" value="TraesROB_scaffold_016095_01G000100"/>
</dbReference>
<dbReference type="EnsemblPlants" id="TraesSTA4A03G02156710.1">
    <property type="protein sequence ID" value="TraesSTA4A03G02156710.1"/>
    <property type="gene ID" value="TraesSTA4A03G02156710"/>
</dbReference>
<dbReference type="EnsemblPlants" id="TraesSYM4A03G02178680.1">
    <property type="protein sequence ID" value="TraesSYM4A03G02178680.1"/>
    <property type="gene ID" value="TraesSYM4A03G02178680"/>
</dbReference>
<dbReference type="EnsemblPlants" id="TraesWEE_scaffold_010029_01G000500.1">
    <property type="protein sequence ID" value="TraesWEE_scaffold_010029_01G000500.1"/>
    <property type="gene ID" value="TraesWEE_scaffold_010029_01G000500"/>
</dbReference>
<dbReference type="Gramene" id="TraesARI4A03G02189310.1">
    <property type="protein sequence ID" value="TraesARI4A03G02189310.1"/>
    <property type="gene ID" value="TraesARI4A03G02189310"/>
</dbReference>
<dbReference type="Gramene" id="TraesCAD_scaffold_095608_01G000100.1">
    <property type="protein sequence ID" value="TraesCAD_scaffold_095608_01G000100.1"/>
    <property type="gene ID" value="TraesCAD_scaffold_095608_01G000100"/>
</dbReference>
<dbReference type="Gramene" id="TraesCLE_scaffold_012902_01G000500.1">
    <property type="protein sequence ID" value="TraesCLE_scaffold_012902_01G000500.1"/>
    <property type="gene ID" value="TraesCLE_scaffold_012902_01G000500"/>
</dbReference>
<dbReference type="Gramene" id="TraesCS4A02G313600.1">
    <property type="protein sequence ID" value="TraesCS4A02G313600.1"/>
    <property type="gene ID" value="TraesCS4A02G313600"/>
</dbReference>
<dbReference type="Gramene" id="TraesCS4A03G0783100.1">
    <property type="protein sequence ID" value="TraesCS4A03G0783100.1.CDS"/>
    <property type="gene ID" value="TraesCS4A03G0783100"/>
</dbReference>
<dbReference type="Gramene" id="TraesJAGUn03G04519160.1">
    <property type="protein sequence ID" value="TraesJAGUn03G04519160.1"/>
    <property type="gene ID" value="TraesJAGUn03G04519160"/>
</dbReference>
<dbReference type="Gramene" id="TraesJUL4A03G02171270.1">
    <property type="protein sequence ID" value="TraesJUL4A03G02171270.1"/>
    <property type="gene ID" value="TraesJUL4A03G02171270"/>
</dbReference>
<dbReference type="Gramene" id="TraesKAR4A01G0371660.1">
    <property type="protein sequence ID" value="cds.TraesKAR4A01G0371660.1"/>
    <property type="gene ID" value="TraesKAR4A01G0371660"/>
</dbReference>
<dbReference type="Gramene" id="TraesLAC4A03G02098910.1">
    <property type="protein sequence ID" value="TraesLAC4A03G02098910.1"/>
    <property type="gene ID" value="TraesLAC4A03G02098910"/>
</dbReference>
<dbReference type="Gramene" id="TraesLDM4A03G02150620.1">
    <property type="protein sequence ID" value="TraesLDM4A03G02150620.1"/>
    <property type="gene ID" value="TraesLDM4A03G02150620"/>
</dbReference>
<dbReference type="Gramene" id="TraesMAC4A03G02150770.1">
    <property type="protein sequence ID" value="TraesMAC4A03G02150770.1"/>
    <property type="gene ID" value="TraesMAC4A03G02150770"/>
</dbReference>
<dbReference type="Gramene" id="TraesMAC4A03G02150770.2">
    <property type="protein sequence ID" value="TraesMAC4A03G02150770.2"/>
    <property type="gene ID" value="TraesMAC4A03G02150770"/>
</dbReference>
<dbReference type="Gramene" id="TraesNOR4A03G02173370.1">
    <property type="protein sequence ID" value="TraesNOR4A03G02173370.1"/>
    <property type="gene ID" value="TraesNOR4A03G02173370"/>
</dbReference>
<dbReference type="Gramene" id="TraesPARA_EIv1.0_1231960.1">
    <property type="protein sequence ID" value="TraesPARA_EIv1.0_1231960.1.CDS"/>
    <property type="gene ID" value="TraesPARA_EIv1.0_1231960"/>
</dbReference>
<dbReference type="Gramene" id="TraesROB_scaffold_016095_01G000100.1">
    <property type="protein sequence ID" value="TraesROB_scaffold_016095_01G000100.1"/>
    <property type="gene ID" value="TraesROB_scaffold_016095_01G000100"/>
</dbReference>
<dbReference type="Gramene" id="TraesSTA4A03G02156710.1">
    <property type="protein sequence ID" value="TraesSTA4A03G02156710.1"/>
    <property type="gene ID" value="TraesSTA4A03G02156710"/>
</dbReference>
<dbReference type="Gramene" id="TraesSYM4A03G02178680.1">
    <property type="protein sequence ID" value="TraesSYM4A03G02178680.1"/>
    <property type="gene ID" value="TraesSYM4A03G02178680"/>
</dbReference>
<dbReference type="Gramene" id="TraesWEE_scaffold_010029_01G000500.1">
    <property type="protein sequence ID" value="TraesWEE_scaffold_010029_01G000500.1"/>
    <property type="gene ID" value="TraesWEE_scaffold_010029_01G000500"/>
</dbReference>
<dbReference type="eggNOG" id="KOG0416">
    <property type="taxonomic scope" value="Eukaryota"/>
</dbReference>
<dbReference type="OMA" id="QDSKIHE"/>
<dbReference type="OrthoDB" id="269518at2759"/>
<dbReference type="UniPathway" id="UPA00143"/>
<dbReference type="Proteomes" id="UP000019116">
    <property type="component" value="Chromosome 4A"/>
</dbReference>
<dbReference type="GO" id="GO:0005634">
    <property type="term" value="C:nucleus"/>
    <property type="evidence" value="ECO:0000318"/>
    <property type="project" value="GO_Central"/>
</dbReference>
<dbReference type="GO" id="GO:0005524">
    <property type="term" value="F:ATP binding"/>
    <property type="evidence" value="ECO:0007669"/>
    <property type="project" value="UniProtKB-KW"/>
</dbReference>
<dbReference type="GO" id="GO:0061631">
    <property type="term" value="F:ubiquitin conjugating enzyme activity"/>
    <property type="evidence" value="ECO:0000318"/>
    <property type="project" value="GO_Central"/>
</dbReference>
<dbReference type="GO" id="GO:0000209">
    <property type="term" value="P:protein polyubiquitination"/>
    <property type="evidence" value="ECO:0000318"/>
    <property type="project" value="GO_Central"/>
</dbReference>
<dbReference type="GO" id="GO:0006511">
    <property type="term" value="P:ubiquitin-dependent protein catabolic process"/>
    <property type="evidence" value="ECO:0000318"/>
    <property type="project" value="GO_Central"/>
</dbReference>
<dbReference type="CDD" id="cd23797">
    <property type="entry name" value="UBCc_UBE2H"/>
    <property type="match status" value="1"/>
</dbReference>
<dbReference type="FunFam" id="3.10.110.10:FF:000024">
    <property type="entry name" value="Ubiquitin-conjugating enzyme 5, E2"/>
    <property type="match status" value="1"/>
</dbReference>
<dbReference type="Gene3D" id="3.10.110.10">
    <property type="entry name" value="Ubiquitin Conjugating Enzyme"/>
    <property type="match status" value="1"/>
</dbReference>
<dbReference type="InterPro" id="IPR000608">
    <property type="entry name" value="UBQ-conjugat_E2_core"/>
</dbReference>
<dbReference type="InterPro" id="IPR023313">
    <property type="entry name" value="UBQ-conjugating_AS"/>
</dbReference>
<dbReference type="InterPro" id="IPR016135">
    <property type="entry name" value="UBQ-conjugating_enzyme/RWD"/>
</dbReference>
<dbReference type="PANTHER" id="PTHR24068">
    <property type="entry name" value="UBIQUITIN-CONJUGATING ENZYME E2"/>
    <property type="match status" value="1"/>
</dbReference>
<dbReference type="Pfam" id="PF00179">
    <property type="entry name" value="UQ_con"/>
    <property type="match status" value="1"/>
</dbReference>
<dbReference type="SMART" id="SM00212">
    <property type="entry name" value="UBCc"/>
    <property type="match status" value="1"/>
</dbReference>
<dbReference type="SUPFAM" id="SSF54495">
    <property type="entry name" value="UBC-like"/>
    <property type="match status" value="1"/>
</dbReference>
<dbReference type="PROSITE" id="PS00183">
    <property type="entry name" value="UBC_1"/>
    <property type="match status" value="1"/>
</dbReference>
<dbReference type="PROSITE" id="PS50127">
    <property type="entry name" value="UBC_2"/>
    <property type="match status" value="1"/>
</dbReference>
<gene>
    <name type="primary">UBC4</name>
</gene>